<proteinExistence type="inferred from homology"/>
<organism>
    <name type="scientific">Vibrio cholerae serotype O1 (strain ATCC 39541 / Classical Ogawa 395 / O395)</name>
    <dbReference type="NCBI Taxonomy" id="345073"/>
    <lineage>
        <taxon>Bacteria</taxon>
        <taxon>Pseudomonadati</taxon>
        <taxon>Pseudomonadota</taxon>
        <taxon>Gammaproteobacteria</taxon>
        <taxon>Vibrionales</taxon>
        <taxon>Vibrionaceae</taxon>
        <taxon>Vibrio</taxon>
    </lineage>
</organism>
<accession>A5F476</accession>
<accession>C3M336</accession>
<gene>
    <name evidence="1" type="primary">atpH</name>
    <name type="ordered locus">VC0395_A2525</name>
    <name type="ordered locus">VC395_0188</name>
</gene>
<evidence type="ECO:0000255" key="1">
    <source>
        <dbReference type="HAMAP-Rule" id="MF_01416"/>
    </source>
</evidence>
<sequence length="177" mass="19558">MSDLTTIARPYAKAAFDFAVEKQQLGHWSQMLAFTAEVAKNEQMHELLTSSGSANKLAEIFIAVCGEQLDGHGQNLIKVMAENGRLLAIPALYEHFAVLKQEHEKKVDVEVISATELSEQQRSEIGSKLEQRLERKVQLNCSVDETLLGGVIIRAGDLVIDNSARGRLKRLSDALQS</sequence>
<name>ATPD_VIBC3</name>
<protein>
    <recommendedName>
        <fullName evidence="1">ATP synthase subunit delta</fullName>
    </recommendedName>
    <alternativeName>
        <fullName evidence="1">ATP synthase F(1) sector subunit delta</fullName>
    </alternativeName>
    <alternativeName>
        <fullName evidence="1">F-type ATPase subunit delta</fullName>
        <shortName evidence="1">F-ATPase subunit delta</shortName>
    </alternativeName>
</protein>
<comment type="function">
    <text evidence="1">F(1)F(0) ATP synthase produces ATP from ADP in the presence of a proton or sodium gradient. F-type ATPases consist of two structural domains, F(1) containing the extramembraneous catalytic core and F(0) containing the membrane proton channel, linked together by a central stalk and a peripheral stalk. During catalysis, ATP synthesis in the catalytic domain of F(1) is coupled via a rotary mechanism of the central stalk subunits to proton translocation.</text>
</comment>
<comment type="function">
    <text evidence="1">This protein is part of the stalk that links CF(0) to CF(1). It either transmits conformational changes from CF(0) to CF(1) or is implicated in proton conduction.</text>
</comment>
<comment type="subunit">
    <text evidence="1">F-type ATPases have 2 components, F(1) - the catalytic core - and F(0) - the membrane proton channel. F(1) has five subunits: alpha(3), beta(3), gamma(1), delta(1), epsilon(1). F(0) has three main subunits: a(1), b(2) and c(10-14). The alpha and beta chains form an alternating ring which encloses part of the gamma chain. F(1) is attached to F(0) by a central stalk formed by the gamma and epsilon chains, while a peripheral stalk is formed by the delta and b chains.</text>
</comment>
<comment type="subcellular location">
    <subcellularLocation>
        <location evidence="1">Cell inner membrane</location>
        <topology evidence="1">Peripheral membrane protein</topology>
    </subcellularLocation>
</comment>
<comment type="similarity">
    <text evidence="1">Belongs to the ATPase delta chain family.</text>
</comment>
<reference key="1">
    <citation type="submission" date="2007-03" db="EMBL/GenBank/DDBJ databases">
        <authorList>
            <person name="Heidelberg J."/>
        </authorList>
    </citation>
    <scope>NUCLEOTIDE SEQUENCE [LARGE SCALE GENOMIC DNA]</scope>
    <source>
        <strain>ATCC 39541 / Classical Ogawa 395 / O395</strain>
    </source>
</reference>
<reference key="2">
    <citation type="journal article" date="2008" name="PLoS ONE">
        <title>A recalibrated molecular clock and independent origins for the cholera pandemic clones.</title>
        <authorList>
            <person name="Feng L."/>
            <person name="Reeves P.R."/>
            <person name="Lan R."/>
            <person name="Ren Y."/>
            <person name="Gao C."/>
            <person name="Zhou Z."/>
            <person name="Ren Y."/>
            <person name="Cheng J."/>
            <person name="Wang W."/>
            <person name="Wang J."/>
            <person name="Qian W."/>
            <person name="Li D."/>
            <person name="Wang L."/>
        </authorList>
    </citation>
    <scope>NUCLEOTIDE SEQUENCE [LARGE SCALE GENOMIC DNA]</scope>
    <source>
        <strain>ATCC 39541 / Classical Ogawa 395 / O395</strain>
    </source>
</reference>
<feature type="chain" id="PRO_0000371193" description="ATP synthase subunit delta">
    <location>
        <begin position="1"/>
        <end position="177"/>
    </location>
</feature>
<dbReference type="EMBL" id="CP000627">
    <property type="protein sequence ID" value="ABQ21423.1"/>
    <property type="molecule type" value="Genomic_DNA"/>
</dbReference>
<dbReference type="EMBL" id="CP001235">
    <property type="protein sequence ID" value="ACP08215.1"/>
    <property type="molecule type" value="Genomic_DNA"/>
</dbReference>
<dbReference type="RefSeq" id="WP_001281808.1">
    <property type="nucleotide sequence ID" value="NZ_JAACZH010000018.1"/>
</dbReference>
<dbReference type="SMR" id="A5F476"/>
<dbReference type="GeneID" id="69721151"/>
<dbReference type="KEGG" id="vco:VC0395_A2525"/>
<dbReference type="KEGG" id="vcr:VC395_0188"/>
<dbReference type="PATRIC" id="fig|345073.21.peg.177"/>
<dbReference type="eggNOG" id="COG0712">
    <property type="taxonomic scope" value="Bacteria"/>
</dbReference>
<dbReference type="HOGENOM" id="CLU_085114_3_0_6"/>
<dbReference type="OrthoDB" id="9816221at2"/>
<dbReference type="Proteomes" id="UP000000249">
    <property type="component" value="Chromosome 2"/>
</dbReference>
<dbReference type="GO" id="GO:0005886">
    <property type="term" value="C:plasma membrane"/>
    <property type="evidence" value="ECO:0007669"/>
    <property type="project" value="UniProtKB-SubCell"/>
</dbReference>
<dbReference type="GO" id="GO:0045259">
    <property type="term" value="C:proton-transporting ATP synthase complex"/>
    <property type="evidence" value="ECO:0007669"/>
    <property type="project" value="UniProtKB-KW"/>
</dbReference>
<dbReference type="GO" id="GO:0046933">
    <property type="term" value="F:proton-transporting ATP synthase activity, rotational mechanism"/>
    <property type="evidence" value="ECO:0007669"/>
    <property type="project" value="UniProtKB-UniRule"/>
</dbReference>
<dbReference type="Gene3D" id="1.10.520.20">
    <property type="entry name" value="N-terminal domain of the delta subunit of the F1F0-ATP synthase"/>
    <property type="match status" value="1"/>
</dbReference>
<dbReference type="HAMAP" id="MF_01416">
    <property type="entry name" value="ATP_synth_delta_bact"/>
    <property type="match status" value="1"/>
</dbReference>
<dbReference type="InterPro" id="IPR026015">
    <property type="entry name" value="ATP_synth_OSCP/delta_N_sf"/>
</dbReference>
<dbReference type="InterPro" id="IPR020781">
    <property type="entry name" value="ATPase_OSCP/d_CS"/>
</dbReference>
<dbReference type="InterPro" id="IPR000711">
    <property type="entry name" value="ATPase_OSCP/dsu"/>
</dbReference>
<dbReference type="NCBIfam" id="TIGR01145">
    <property type="entry name" value="ATP_synt_delta"/>
    <property type="match status" value="1"/>
</dbReference>
<dbReference type="NCBIfam" id="NF004402">
    <property type="entry name" value="PRK05758.2-2"/>
    <property type="match status" value="1"/>
</dbReference>
<dbReference type="NCBIfam" id="NF004404">
    <property type="entry name" value="PRK05758.2-5"/>
    <property type="match status" value="1"/>
</dbReference>
<dbReference type="PANTHER" id="PTHR11910">
    <property type="entry name" value="ATP SYNTHASE DELTA CHAIN"/>
    <property type="match status" value="1"/>
</dbReference>
<dbReference type="Pfam" id="PF00213">
    <property type="entry name" value="OSCP"/>
    <property type="match status" value="1"/>
</dbReference>
<dbReference type="PRINTS" id="PR00125">
    <property type="entry name" value="ATPASEDELTA"/>
</dbReference>
<dbReference type="SUPFAM" id="SSF47928">
    <property type="entry name" value="N-terminal domain of the delta subunit of the F1F0-ATP synthase"/>
    <property type="match status" value="1"/>
</dbReference>
<dbReference type="PROSITE" id="PS00389">
    <property type="entry name" value="ATPASE_DELTA"/>
    <property type="match status" value="1"/>
</dbReference>
<keyword id="KW-0066">ATP synthesis</keyword>
<keyword id="KW-0997">Cell inner membrane</keyword>
<keyword id="KW-1003">Cell membrane</keyword>
<keyword id="KW-0139">CF(1)</keyword>
<keyword id="KW-0375">Hydrogen ion transport</keyword>
<keyword id="KW-0406">Ion transport</keyword>
<keyword id="KW-0472">Membrane</keyword>
<keyword id="KW-0813">Transport</keyword>